<accession>Q3Z1Y2</accession>
<protein>
    <recommendedName>
        <fullName evidence="1">Ion-translocating oxidoreductase complex subunit A</fullName>
        <ecNumber evidence="1">7.-.-.-</ecNumber>
    </recommendedName>
    <alternativeName>
        <fullName evidence="1">Rsx electron transport complex subunit A</fullName>
    </alternativeName>
</protein>
<name>RSXA_SHISS</name>
<proteinExistence type="inferred from homology"/>
<gene>
    <name evidence="1" type="primary">rsxA</name>
    <name type="ordered locus">SSON_1531</name>
</gene>
<sequence>MTDYLLLFVGTVLVNNFVLVKFLGLCPFMGVSKKLETAMGMGLATTFVMTLASICAWLIDTWILIPLNLIYLRTLAFILVIAVVVQFTEMVVRKTSPVLYRLLGIFLPLITTNCAVLGVALLNINLGHNFLQSALYGFSAAVGFSLVMVLFAAIRERLAVADVPAPFRGNAIALITAGLMSLAFMGFNGLVKL</sequence>
<organism>
    <name type="scientific">Shigella sonnei (strain Ss046)</name>
    <dbReference type="NCBI Taxonomy" id="300269"/>
    <lineage>
        <taxon>Bacteria</taxon>
        <taxon>Pseudomonadati</taxon>
        <taxon>Pseudomonadota</taxon>
        <taxon>Gammaproteobacteria</taxon>
        <taxon>Enterobacterales</taxon>
        <taxon>Enterobacteriaceae</taxon>
        <taxon>Shigella</taxon>
    </lineage>
</organism>
<dbReference type="EC" id="7.-.-.-" evidence="1"/>
<dbReference type="EMBL" id="CP000038">
    <property type="protein sequence ID" value="AAZ88230.1"/>
    <property type="molecule type" value="Genomic_DNA"/>
</dbReference>
<dbReference type="RefSeq" id="WP_000133192.1">
    <property type="nucleotide sequence ID" value="NC_007384.1"/>
</dbReference>
<dbReference type="SMR" id="Q3Z1Y2"/>
<dbReference type="GeneID" id="93775779"/>
<dbReference type="KEGG" id="ssn:SSON_1531"/>
<dbReference type="HOGENOM" id="CLU_095255_1_0_6"/>
<dbReference type="Proteomes" id="UP000002529">
    <property type="component" value="Chromosome"/>
</dbReference>
<dbReference type="GO" id="GO:0005886">
    <property type="term" value="C:plasma membrane"/>
    <property type="evidence" value="ECO:0007669"/>
    <property type="project" value="UniProtKB-SubCell"/>
</dbReference>
<dbReference type="GO" id="GO:0022900">
    <property type="term" value="P:electron transport chain"/>
    <property type="evidence" value="ECO:0007669"/>
    <property type="project" value="UniProtKB-UniRule"/>
</dbReference>
<dbReference type="HAMAP" id="MF_00459">
    <property type="entry name" value="RsxA_RnfA"/>
    <property type="match status" value="1"/>
</dbReference>
<dbReference type="InterPro" id="IPR011293">
    <property type="entry name" value="Ion_transpt_RnfA/RsxA"/>
</dbReference>
<dbReference type="InterPro" id="IPR003667">
    <property type="entry name" value="NqrDE/RnfAE"/>
</dbReference>
<dbReference type="InterPro" id="IPR050133">
    <property type="entry name" value="NqrDE/RnfAE_oxidrdctase"/>
</dbReference>
<dbReference type="NCBIfam" id="NF003481">
    <property type="entry name" value="PRK05151.1"/>
    <property type="match status" value="1"/>
</dbReference>
<dbReference type="NCBIfam" id="TIGR01943">
    <property type="entry name" value="rnfA"/>
    <property type="match status" value="1"/>
</dbReference>
<dbReference type="PANTHER" id="PTHR30335">
    <property type="entry name" value="INTEGRAL MEMBRANE PROTEIN OF SOXR-REDUCING COMPLEX"/>
    <property type="match status" value="1"/>
</dbReference>
<dbReference type="PANTHER" id="PTHR30335:SF0">
    <property type="entry name" value="ION-TRANSLOCATING OXIDOREDUCTASE COMPLEX SUBUNIT A"/>
    <property type="match status" value="1"/>
</dbReference>
<dbReference type="Pfam" id="PF02508">
    <property type="entry name" value="Rnf-Nqr"/>
    <property type="match status" value="1"/>
</dbReference>
<dbReference type="PIRSF" id="PIRSF006102">
    <property type="entry name" value="NQR_DE"/>
    <property type="match status" value="1"/>
</dbReference>
<comment type="function">
    <text evidence="1">Part of a membrane-bound complex that couples electron transfer with translocation of ions across the membrane. Required to maintain the reduced state of SoxR.</text>
</comment>
<comment type="subunit">
    <text evidence="1">The complex is composed of six subunits: RsxA, RsxB, RsxC, RsxD, RsxE and RsxG.</text>
</comment>
<comment type="subcellular location">
    <subcellularLocation>
        <location evidence="1">Cell inner membrane</location>
        <topology evidence="1">Multi-pass membrane protein</topology>
    </subcellularLocation>
</comment>
<comment type="similarity">
    <text evidence="1">Belongs to the NqrDE/RnfAE family.</text>
</comment>
<feature type="chain" id="PRO_1000013560" description="Ion-translocating oxidoreductase complex subunit A">
    <location>
        <begin position="1"/>
        <end position="193"/>
    </location>
</feature>
<feature type="transmembrane region" description="Helical" evidence="1">
    <location>
        <begin position="5"/>
        <end position="25"/>
    </location>
</feature>
<feature type="transmembrane region" description="Helical" evidence="1">
    <location>
        <begin position="39"/>
        <end position="59"/>
    </location>
</feature>
<feature type="transmembrane region" description="Helical" evidence="1">
    <location>
        <begin position="63"/>
        <end position="83"/>
    </location>
</feature>
<feature type="transmembrane region" description="Helical" evidence="1">
    <location>
        <begin position="102"/>
        <end position="122"/>
    </location>
</feature>
<feature type="transmembrane region" description="Helical" evidence="1">
    <location>
        <begin position="134"/>
        <end position="154"/>
    </location>
</feature>
<feature type="transmembrane region" description="Helical" evidence="1">
    <location>
        <begin position="171"/>
        <end position="191"/>
    </location>
</feature>
<evidence type="ECO:0000255" key="1">
    <source>
        <dbReference type="HAMAP-Rule" id="MF_00459"/>
    </source>
</evidence>
<keyword id="KW-0997">Cell inner membrane</keyword>
<keyword id="KW-1003">Cell membrane</keyword>
<keyword id="KW-0249">Electron transport</keyword>
<keyword id="KW-0472">Membrane</keyword>
<keyword id="KW-1185">Reference proteome</keyword>
<keyword id="KW-1278">Translocase</keyword>
<keyword id="KW-0812">Transmembrane</keyword>
<keyword id="KW-1133">Transmembrane helix</keyword>
<keyword id="KW-0813">Transport</keyword>
<reference key="1">
    <citation type="journal article" date="2005" name="Nucleic Acids Res.">
        <title>Genome dynamics and diversity of Shigella species, the etiologic agents of bacillary dysentery.</title>
        <authorList>
            <person name="Yang F."/>
            <person name="Yang J."/>
            <person name="Zhang X."/>
            <person name="Chen L."/>
            <person name="Jiang Y."/>
            <person name="Yan Y."/>
            <person name="Tang X."/>
            <person name="Wang J."/>
            <person name="Xiong Z."/>
            <person name="Dong J."/>
            <person name="Xue Y."/>
            <person name="Zhu Y."/>
            <person name="Xu X."/>
            <person name="Sun L."/>
            <person name="Chen S."/>
            <person name="Nie H."/>
            <person name="Peng J."/>
            <person name="Xu J."/>
            <person name="Wang Y."/>
            <person name="Yuan Z."/>
            <person name="Wen Y."/>
            <person name="Yao Z."/>
            <person name="Shen Y."/>
            <person name="Qiang B."/>
            <person name="Hou Y."/>
            <person name="Yu J."/>
            <person name="Jin Q."/>
        </authorList>
    </citation>
    <scope>NUCLEOTIDE SEQUENCE [LARGE SCALE GENOMIC DNA]</scope>
    <source>
        <strain>Ss046</strain>
    </source>
</reference>